<reference key="1">
    <citation type="journal article" date="2008" name="BMC Genomics">
        <title>The genome of Aeromonas salmonicida subsp. salmonicida A449: insights into the evolution of a fish pathogen.</title>
        <authorList>
            <person name="Reith M.E."/>
            <person name="Singh R.K."/>
            <person name="Curtis B."/>
            <person name="Boyd J.M."/>
            <person name="Bouevitch A."/>
            <person name="Kimball J."/>
            <person name="Munholland J."/>
            <person name="Murphy C."/>
            <person name="Sarty D."/>
            <person name="Williams J."/>
            <person name="Nash J.H."/>
            <person name="Johnson S.C."/>
            <person name="Brown L.L."/>
        </authorList>
    </citation>
    <scope>NUCLEOTIDE SEQUENCE [LARGE SCALE GENOMIC DNA]</scope>
    <source>
        <strain>A449</strain>
    </source>
</reference>
<name>RL31B_AERS4</name>
<sequence>MRPNIHPEYRQVLFHDLTANTYFLVGSTLKTDRTKQWEDGNTYPYVTLDVSSASHPFYTGKQKQIGKEGQVARFGQRFGQFFNKGKDKS</sequence>
<gene>
    <name evidence="1" type="primary">rpmE2</name>
    <name type="ordered locus">ASA_2374</name>
</gene>
<comment type="subunit">
    <text evidence="1">Part of the 50S ribosomal subunit.</text>
</comment>
<comment type="similarity">
    <text evidence="1">Belongs to the bacterial ribosomal protein bL31 family. Type B subfamily.</text>
</comment>
<protein>
    <recommendedName>
        <fullName evidence="1">Large ribosomal subunit protein bL31B</fullName>
    </recommendedName>
    <alternativeName>
        <fullName evidence="2">50S ribosomal protein L31 type B</fullName>
    </alternativeName>
</protein>
<dbReference type="EMBL" id="CP000644">
    <property type="protein sequence ID" value="ABO90422.1"/>
    <property type="molecule type" value="Genomic_DNA"/>
</dbReference>
<dbReference type="RefSeq" id="WP_005310870.1">
    <property type="nucleotide sequence ID" value="NC_009348.1"/>
</dbReference>
<dbReference type="SMR" id="A4SNF0"/>
<dbReference type="STRING" id="29491.GCA_000820065_01555"/>
<dbReference type="KEGG" id="asa:ASA_2374"/>
<dbReference type="eggNOG" id="COG0254">
    <property type="taxonomic scope" value="Bacteria"/>
</dbReference>
<dbReference type="HOGENOM" id="CLU_114306_2_2_6"/>
<dbReference type="Proteomes" id="UP000000225">
    <property type="component" value="Chromosome"/>
</dbReference>
<dbReference type="GO" id="GO:1990904">
    <property type="term" value="C:ribonucleoprotein complex"/>
    <property type="evidence" value="ECO:0007669"/>
    <property type="project" value="UniProtKB-KW"/>
</dbReference>
<dbReference type="GO" id="GO:0005840">
    <property type="term" value="C:ribosome"/>
    <property type="evidence" value="ECO:0007669"/>
    <property type="project" value="UniProtKB-KW"/>
</dbReference>
<dbReference type="GO" id="GO:0003735">
    <property type="term" value="F:structural constituent of ribosome"/>
    <property type="evidence" value="ECO:0007669"/>
    <property type="project" value="InterPro"/>
</dbReference>
<dbReference type="GO" id="GO:0006412">
    <property type="term" value="P:translation"/>
    <property type="evidence" value="ECO:0007669"/>
    <property type="project" value="UniProtKB-UniRule"/>
</dbReference>
<dbReference type="Gene3D" id="4.10.830.30">
    <property type="entry name" value="Ribosomal protein L31"/>
    <property type="match status" value="1"/>
</dbReference>
<dbReference type="HAMAP" id="MF_00502">
    <property type="entry name" value="Ribosomal_bL31_2"/>
    <property type="match status" value="1"/>
</dbReference>
<dbReference type="InterPro" id="IPR034704">
    <property type="entry name" value="Ribosomal_bL28/bL31-like_sf"/>
</dbReference>
<dbReference type="InterPro" id="IPR002150">
    <property type="entry name" value="Ribosomal_bL31"/>
</dbReference>
<dbReference type="InterPro" id="IPR027493">
    <property type="entry name" value="Ribosomal_bL31_B"/>
</dbReference>
<dbReference type="InterPro" id="IPR042105">
    <property type="entry name" value="Ribosomal_bL31_sf"/>
</dbReference>
<dbReference type="NCBIfam" id="TIGR00105">
    <property type="entry name" value="L31"/>
    <property type="match status" value="1"/>
</dbReference>
<dbReference type="NCBIfam" id="NF002462">
    <property type="entry name" value="PRK01678.1"/>
    <property type="match status" value="1"/>
</dbReference>
<dbReference type="PANTHER" id="PTHR33280">
    <property type="entry name" value="50S RIBOSOMAL PROTEIN L31, CHLOROPLASTIC"/>
    <property type="match status" value="1"/>
</dbReference>
<dbReference type="PANTHER" id="PTHR33280:SF1">
    <property type="entry name" value="LARGE RIBOSOMAL SUBUNIT PROTEIN BL31C"/>
    <property type="match status" value="1"/>
</dbReference>
<dbReference type="Pfam" id="PF01197">
    <property type="entry name" value="Ribosomal_L31"/>
    <property type="match status" value="1"/>
</dbReference>
<dbReference type="PRINTS" id="PR01249">
    <property type="entry name" value="RIBOSOMALL31"/>
</dbReference>
<dbReference type="SUPFAM" id="SSF143800">
    <property type="entry name" value="L28p-like"/>
    <property type="match status" value="1"/>
</dbReference>
<dbReference type="PROSITE" id="PS01143">
    <property type="entry name" value="RIBOSOMAL_L31"/>
    <property type="match status" value="1"/>
</dbReference>
<evidence type="ECO:0000255" key="1">
    <source>
        <dbReference type="HAMAP-Rule" id="MF_00502"/>
    </source>
</evidence>
<evidence type="ECO:0000305" key="2"/>
<proteinExistence type="inferred from homology"/>
<keyword id="KW-0687">Ribonucleoprotein</keyword>
<keyword id="KW-0689">Ribosomal protein</keyword>
<feature type="chain" id="PRO_1000014680" description="Large ribosomal subunit protein bL31B">
    <location>
        <begin position="1"/>
        <end position="89"/>
    </location>
</feature>
<organism>
    <name type="scientific">Aeromonas salmonicida (strain A449)</name>
    <dbReference type="NCBI Taxonomy" id="382245"/>
    <lineage>
        <taxon>Bacteria</taxon>
        <taxon>Pseudomonadati</taxon>
        <taxon>Pseudomonadota</taxon>
        <taxon>Gammaproteobacteria</taxon>
        <taxon>Aeromonadales</taxon>
        <taxon>Aeromonadaceae</taxon>
        <taxon>Aeromonas</taxon>
    </lineage>
</organism>
<accession>A4SNF0</accession>